<protein>
    <recommendedName>
        <fullName>Bifunctional protein GlmU</fullName>
    </recommendedName>
    <domain>
        <recommendedName>
            <fullName>UDP-N-acetylglucosamine pyrophosphorylase</fullName>
            <ecNumber>2.7.7.23</ecNumber>
        </recommendedName>
        <alternativeName>
            <fullName>N-acetylglucosamine-1-phosphate uridyltransferase</fullName>
        </alternativeName>
    </domain>
    <domain>
        <recommendedName>
            <fullName>Glucosamine-1-phosphate N-acetyltransferase</fullName>
            <ecNumber>2.3.1.157</ecNumber>
        </recommendedName>
    </domain>
</protein>
<accession>P42817</accession>
<name>GLMU_BACCL</name>
<organism>
    <name type="scientific">Bacillus caldolyticus</name>
    <dbReference type="NCBI Taxonomy" id="1394"/>
    <lineage>
        <taxon>Bacteria</taxon>
        <taxon>Bacillati</taxon>
        <taxon>Bacillota</taxon>
        <taxon>Bacilli</taxon>
        <taxon>Bacillales</taxon>
        <taxon>Anoxybacillaceae</taxon>
        <taxon>Geobacillus</taxon>
        <taxon>Geobacillus thermoleovorans group</taxon>
    </lineage>
</organism>
<sequence>IGNFVEVKKSTFGKGSKAPHLSYIGDAEVGADVNLGCGSITVNYDGVNKHMTKIENGAFIGCNVNLIAPVTVGQGAYVAAGSTITNDVPGRALAIARARQVNKENYVDRLPGKKKS</sequence>
<evidence type="ECO:0000250" key="1"/>
<evidence type="ECO:0000305" key="2"/>
<feature type="chain" id="PRO_0000068705" description="Bifunctional protein GlmU">
    <location>
        <begin position="1" status="less than"/>
        <end position="116"/>
    </location>
</feature>
<feature type="active site" description="Proton acceptor" evidence="1">
    <location>
        <position position="20"/>
    </location>
</feature>
<feature type="binding site" evidence="1">
    <location>
        <position position="8"/>
    </location>
    <ligand>
        <name>acetyl-CoA</name>
        <dbReference type="ChEBI" id="CHEBI:57288"/>
    </ligand>
</feature>
<feature type="binding site" evidence="1">
    <location>
        <position position="23"/>
    </location>
    <ligand>
        <name>acetyl-CoA</name>
        <dbReference type="ChEBI" id="CHEBI:57288"/>
    </ligand>
</feature>
<feature type="binding site" evidence="1">
    <location>
        <position position="34"/>
    </location>
    <ligand>
        <name>acetyl-CoA</name>
        <dbReference type="ChEBI" id="CHEBI:57288"/>
    </ligand>
</feature>
<feature type="binding site" evidence="1">
    <location>
        <begin position="43"/>
        <end position="44"/>
    </location>
    <ligand>
        <name>acetyl-CoA</name>
        <dbReference type="ChEBI" id="CHEBI:57288"/>
    </ligand>
</feature>
<feature type="binding site" evidence="1">
    <location>
        <position position="80"/>
    </location>
    <ligand>
        <name>acetyl-CoA</name>
        <dbReference type="ChEBI" id="CHEBI:57288"/>
    </ligand>
</feature>
<feature type="binding site" evidence="1">
    <location>
        <position position="97"/>
    </location>
    <ligand>
        <name>acetyl-CoA</name>
        <dbReference type="ChEBI" id="CHEBI:57288"/>
    </ligand>
</feature>
<feature type="non-terminal residue">
    <location>
        <position position="1"/>
    </location>
</feature>
<dbReference type="EC" id="2.7.7.23"/>
<dbReference type="EC" id="2.3.1.157"/>
<dbReference type="EMBL" id="X83708">
    <property type="protein sequence ID" value="CAA58681.1"/>
    <property type="molecule type" value="Genomic_DNA"/>
</dbReference>
<dbReference type="PIR" id="PC4228">
    <property type="entry name" value="PC4228"/>
</dbReference>
<dbReference type="SMR" id="P42817"/>
<dbReference type="UniPathway" id="UPA00113">
    <property type="reaction ID" value="UER00532"/>
</dbReference>
<dbReference type="UniPathway" id="UPA00113">
    <property type="reaction ID" value="UER00533"/>
</dbReference>
<dbReference type="UniPathway" id="UPA00973"/>
<dbReference type="GO" id="GO:0005737">
    <property type="term" value="C:cytoplasm"/>
    <property type="evidence" value="ECO:0007669"/>
    <property type="project" value="UniProtKB-SubCell"/>
</dbReference>
<dbReference type="GO" id="GO:0016020">
    <property type="term" value="C:membrane"/>
    <property type="evidence" value="ECO:0007669"/>
    <property type="project" value="GOC"/>
</dbReference>
<dbReference type="GO" id="GO:0019134">
    <property type="term" value="F:glucosamine-1-phosphate N-acetyltransferase activity"/>
    <property type="evidence" value="ECO:0007669"/>
    <property type="project" value="UniProtKB-EC"/>
</dbReference>
<dbReference type="GO" id="GO:0046872">
    <property type="term" value="F:metal ion binding"/>
    <property type="evidence" value="ECO:0007669"/>
    <property type="project" value="UniProtKB-KW"/>
</dbReference>
<dbReference type="GO" id="GO:0003977">
    <property type="term" value="F:UDP-N-acetylglucosamine diphosphorylase activity"/>
    <property type="evidence" value="ECO:0007669"/>
    <property type="project" value="UniProtKB-EC"/>
</dbReference>
<dbReference type="GO" id="GO:0071555">
    <property type="term" value="P:cell wall organization"/>
    <property type="evidence" value="ECO:0007669"/>
    <property type="project" value="UniProtKB-KW"/>
</dbReference>
<dbReference type="GO" id="GO:0009245">
    <property type="term" value="P:lipid A biosynthetic process"/>
    <property type="evidence" value="ECO:0007669"/>
    <property type="project" value="UniProtKB-UniPathway"/>
</dbReference>
<dbReference type="GO" id="GO:0009252">
    <property type="term" value="P:peptidoglycan biosynthetic process"/>
    <property type="evidence" value="ECO:0007669"/>
    <property type="project" value="UniProtKB-KW"/>
</dbReference>
<dbReference type="GO" id="GO:0008360">
    <property type="term" value="P:regulation of cell shape"/>
    <property type="evidence" value="ECO:0007669"/>
    <property type="project" value="UniProtKB-KW"/>
</dbReference>
<dbReference type="GO" id="GO:0006048">
    <property type="term" value="P:UDP-N-acetylglucosamine biosynthetic process"/>
    <property type="evidence" value="ECO:0007669"/>
    <property type="project" value="UniProtKB-UniPathway"/>
</dbReference>
<dbReference type="Gene3D" id="2.160.10.10">
    <property type="entry name" value="Hexapeptide repeat proteins"/>
    <property type="match status" value="1"/>
</dbReference>
<dbReference type="InterPro" id="IPR050065">
    <property type="entry name" value="GlmU-like"/>
</dbReference>
<dbReference type="InterPro" id="IPR001451">
    <property type="entry name" value="Hexapep"/>
</dbReference>
<dbReference type="InterPro" id="IPR018357">
    <property type="entry name" value="Hexapep_transf_CS"/>
</dbReference>
<dbReference type="InterPro" id="IPR011004">
    <property type="entry name" value="Trimer_LpxA-like_sf"/>
</dbReference>
<dbReference type="PANTHER" id="PTHR43584:SF3">
    <property type="entry name" value="BIFUNCTIONAL PROTEIN GLMU"/>
    <property type="match status" value="1"/>
</dbReference>
<dbReference type="PANTHER" id="PTHR43584">
    <property type="entry name" value="NUCLEOTIDYL TRANSFERASE"/>
    <property type="match status" value="1"/>
</dbReference>
<dbReference type="Pfam" id="PF00132">
    <property type="entry name" value="Hexapep"/>
    <property type="match status" value="1"/>
</dbReference>
<dbReference type="SUPFAM" id="SSF51161">
    <property type="entry name" value="Trimeric LpxA-like enzymes"/>
    <property type="match status" value="1"/>
</dbReference>
<dbReference type="PROSITE" id="PS00101">
    <property type="entry name" value="HEXAPEP_TRANSFERASES"/>
    <property type="match status" value="1"/>
</dbReference>
<gene>
    <name type="primary">glmU</name>
    <name type="synonym">gcaD</name>
</gene>
<reference key="1">
    <citation type="journal article" date="1996" name="Gene">
        <title>Bacillus caldolyticus prs gene encoding phosphoribosyl-diphosphate synthase.</title>
        <authorList>
            <person name="Krath B.N."/>
            <person name="Hove-Jensen B."/>
        </authorList>
    </citation>
    <scope>NUCLEOTIDE SEQUENCE [GENOMIC DNA]</scope>
    <source>
        <strain>DSM 405 / NBRC 15313 / YP-T</strain>
    </source>
</reference>
<comment type="function">
    <text evidence="1">Catalyzes the last two sequential reactions in the de novo biosynthetic pathway for UDP-N-acetylglucosamine (UDP-GlcNAc). The C-terminal domain catalyzes the transfer of acetyl group from acetyl coenzyme A to glucosamine-1-phosphate (GlcN-1-P) to produce N-acetylglucosamine-1-phosphate (GlcNAc-1-P), which is converted into UDP-GlcNAc by the transfer of uridine 5-monophosphate (from uridine 5-triphosphate), a reaction catalyzed by the N-terminal domain (By similarity).</text>
</comment>
<comment type="catalytic activity">
    <reaction>
        <text>alpha-D-glucosamine 1-phosphate + acetyl-CoA = N-acetyl-alpha-D-glucosamine 1-phosphate + CoA + H(+)</text>
        <dbReference type="Rhea" id="RHEA:13725"/>
        <dbReference type="ChEBI" id="CHEBI:15378"/>
        <dbReference type="ChEBI" id="CHEBI:57287"/>
        <dbReference type="ChEBI" id="CHEBI:57288"/>
        <dbReference type="ChEBI" id="CHEBI:57776"/>
        <dbReference type="ChEBI" id="CHEBI:58516"/>
        <dbReference type="EC" id="2.3.1.157"/>
    </reaction>
</comment>
<comment type="catalytic activity">
    <reaction>
        <text>N-acetyl-alpha-D-glucosamine 1-phosphate + UTP + H(+) = UDP-N-acetyl-alpha-D-glucosamine + diphosphate</text>
        <dbReference type="Rhea" id="RHEA:13509"/>
        <dbReference type="ChEBI" id="CHEBI:15378"/>
        <dbReference type="ChEBI" id="CHEBI:33019"/>
        <dbReference type="ChEBI" id="CHEBI:46398"/>
        <dbReference type="ChEBI" id="CHEBI:57705"/>
        <dbReference type="ChEBI" id="CHEBI:57776"/>
        <dbReference type="EC" id="2.7.7.23"/>
    </reaction>
</comment>
<comment type="cofactor">
    <cofactor evidence="1">
        <name>Mg(2+)</name>
        <dbReference type="ChEBI" id="CHEBI:18420"/>
    </cofactor>
    <text evidence="1">Binds 1 Mg(2+) ion per subunit.</text>
</comment>
<comment type="pathway">
    <text>Nucleotide-sugar biosynthesis; UDP-N-acetyl-alpha-D-glucosamine biosynthesis; N-acetyl-alpha-D-glucosamine 1-phosphate from alpha-D-glucosamine 6-phosphate (route II): step 2/2.</text>
</comment>
<comment type="pathway">
    <text>Nucleotide-sugar biosynthesis; UDP-N-acetyl-alpha-D-glucosamine biosynthesis; UDP-N-acetyl-alpha-D-glucosamine from N-acetyl-alpha-D-glucosamine 1-phosphate: step 1/1.</text>
</comment>
<comment type="pathway">
    <text>Bacterial outer membrane biogenesis; LPS lipid A biosynthesis.</text>
</comment>
<comment type="subcellular location">
    <subcellularLocation>
        <location evidence="1">Cytoplasm</location>
    </subcellularLocation>
</comment>
<comment type="similarity">
    <text evidence="2">In the N-terminal section; belongs to the N-acetylglucosamine-1-phosphate uridyltransferase family.</text>
</comment>
<comment type="similarity">
    <text evidence="2">In the C-terminal section; belongs to the transferase hexapeptide repeat family.</text>
</comment>
<keyword id="KW-0012">Acyltransferase</keyword>
<keyword id="KW-0133">Cell shape</keyword>
<keyword id="KW-0961">Cell wall biogenesis/degradation</keyword>
<keyword id="KW-0963">Cytoplasm</keyword>
<keyword id="KW-0460">Magnesium</keyword>
<keyword id="KW-0479">Metal-binding</keyword>
<keyword id="KW-0511">Multifunctional enzyme</keyword>
<keyword id="KW-0548">Nucleotidyltransferase</keyword>
<keyword id="KW-0573">Peptidoglycan synthesis</keyword>
<keyword id="KW-0677">Repeat</keyword>
<keyword id="KW-0808">Transferase</keyword>
<proteinExistence type="inferred from homology"/>